<comment type="function">
    <text evidence="2">Component of the ubiquinol-cytochrome c reductase complex (complex III or cytochrome b-c1 complex) that is part of the mitochondrial respiratory chain. The b-c1 complex mediates electron transfer from ubiquinol to cytochrome c. Contributes to the generation of a proton gradient across the mitochondrial membrane that is then used for ATP synthesis.</text>
</comment>
<comment type="cofactor">
    <cofactor evidence="2">
        <name>heme b</name>
        <dbReference type="ChEBI" id="CHEBI:60344"/>
    </cofactor>
    <text evidence="2">Binds 2 heme b groups non-covalently.</text>
</comment>
<comment type="subunit">
    <text evidence="2">The cytochrome bc1 complex contains 11 subunits: 3 respiratory subunits (MT-CYB, CYC1 and UQCRFS1), 2 core proteins (UQCRC1 and UQCRC2) and 6 low-molecular weight proteins (UQCRH/QCR6, UQCRB/QCR7, UQCRQ/QCR8, UQCR10/QCR9, UQCR11/QCR10 and a cleavage product of UQCRFS1). This cytochrome bc1 complex then forms a dimer.</text>
</comment>
<comment type="subcellular location">
    <subcellularLocation>
        <location evidence="2">Mitochondrion inner membrane</location>
        <topology evidence="2">Multi-pass membrane protein</topology>
    </subcellularLocation>
</comment>
<comment type="miscellaneous">
    <text evidence="1">Heme 1 (or BL or b562) is low-potential and absorbs at about 562 nm, and heme 2 (or BH or b566) is high-potential and absorbs at about 566 nm.</text>
</comment>
<comment type="similarity">
    <text evidence="3 4">Belongs to the cytochrome b family.</text>
</comment>
<comment type="caution">
    <text evidence="2">The full-length protein contains only eight transmembrane helices, not nine as predicted by bioinformatics tools.</text>
</comment>
<geneLocation type="mitochondrion"/>
<organism>
    <name type="scientific">Cratogeomys planiceps</name>
    <name type="common">Pocket gopher</name>
    <dbReference type="NCBI Taxonomy" id="278198"/>
    <lineage>
        <taxon>Eukaryota</taxon>
        <taxon>Metazoa</taxon>
        <taxon>Chordata</taxon>
        <taxon>Craniata</taxon>
        <taxon>Vertebrata</taxon>
        <taxon>Euteleostomi</taxon>
        <taxon>Mammalia</taxon>
        <taxon>Eutheria</taxon>
        <taxon>Euarchontoglires</taxon>
        <taxon>Glires</taxon>
        <taxon>Rodentia</taxon>
        <taxon>Castorimorpha</taxon>
        <taxon>Geomyidae</taxon>
        <taxon>Cratogeomys</taxon>
    </lineage>
</organism>
<feature type="chain" id="PRO_0000255011" description="Cytochrome b">
    <location>
        <begin position="1"/>
        <end position="379"/>
    </location>
</feature>
<feature type="transmembrane region" description="Helical" evidence="2">
    <location>
        <begin position="33"/>
        <end position="53"/>
    </location>
</feature>
<feature type="transmembrane region" description="Helical" evidence="2">
    <location>
        <begin position="77"/>
        <end position="98"/>
    </location>
</feature>
<feature type="transmembrane region" description="Helical" evidence="2">
    <location>
        <begin position="113"/>
        <end position="133"/>
    </location>
</feature>
<feature type="transmembrane region" description="Helical" evidence="2">
    <location>
        <begin position="178"/>
        <end position="198"/>
    </location>
</feature>
<feature type="transmembrane region" description="Helical" evidence="2">
    <location>
        <begin position="226"/>
        <end position="246"/>
    </location>
</feature>
<feature type="transmembrane region" description="Helical" evidence="2">
    <location>
        <begin position="288"/>
        <end position="308"/>
    </location>
</feature>
<feature type="transmembrane region" description="Helical" evidence="2">
    <location>
        <begin position="320"/>
        <end position="340"/>
    </location>
</feature>
<feature type="transmembrane region" description="Helical" evidence="2">
    <location>
        <begin position="347"/>
        <end position="367"/>
    </location>
</feature>
<feature type="binding site" description="axial binding residue" evidence="2">
    <location>
        <position position="83"/>
    </location>
    <ligand>
        <name>heme b</name>
        <dbReference type="ChEBI" id="CHEBI:60344"/>
        <label>b562</label>
    </ligand>
    <ligandPart>
        <name>Fe</name>
        <dbReference type="ChEBI" id="CHEBI:18248"/>
    </ligandPart>
</feature>
<feature type="binding site" description="axial binding residue" evidence="2">
    <location>
        <position position="97"/>
    </location>
    <ligand>
        <name>heme b</name>
        <dbReference type="ChEBI" id="CHEBI:60344"/>
        <label>b566</label>
    </ligand>
    <ligandPart>
        <name>Fe</name>
        <dbReference type="ChEBI" id="CHEBI:18248"/>
    </ligandPart>
</feature>
<feature type="binding site" description="axial binding residue" evidence="2">
    <location>
        <position position="182"/>
    </location>
    <ligand>
        <name>heme b</name>
        <dbReference type="ChEBI" id="CHEBI:60344"/>
        <label>b562</label>
    </ligand>
    <ligandPart>
        <name>Fe</name>
        <dbReference type="ChEBI" id="CHEBI:18248"/>
    </ligandPart>
</feature>
<feature type="binding site" description="axial binding residue" evidence="2">
    <location>
        <position position="196"/>
    </location>
    <ligand>
        <name>heme b</name>
        <dbReference type="ChEBI" id="CHEBI:60344"/>
        <label>b566</label>
    </ligand>
    <ligandPart>
        <name>Fe</name>
        <dbReference type="ChEBI" id="CHEBI:18248"/>
    </ligandPart>
</feature>
<feature type="binding site" evidence="2">
    <location>
        <position position="201"/>
    </location>
    <ligand>
        <name>a ubiquinone</name>
        <dbReference type="ChEBI" id="CHEBI:16389"/>
    </ligand>
</feature>
<feature type="sequence variant" description="In strain: Isolate LSUMZ 36303.">
    <original>S</original>
    <variation>P</variation>
    <location>
        <position position="345"/>
    </location>
</feature>
<reference key="1">
    <citation type="journal article" date="2004" name="J. Mammal.">
        <title>Systematic revision of pocket gophers of the Cratogeomys gymnurus species group.</title>
        <authorList>
            <person name="Hafner M.S."/>
            <person name="Spradling T.A."/>
            <person name="Light J.E."/>
            <person name="Hafner D.J."/>
            <person name="Demboski J.R."/>
        </authorList>
    </citation>
    <scope>NUCLEOTIDE SEQUENCE [GENOMIC DNA]</scope>
    <source>
        <strain>Isolate LSUMZ 34901</strain>
        <strain>Isolate LSUMZ 36291</strain>
        <strain>Isolate LSUMZ 36303</strain>
    </source>
</reference>
<accession>Q698P7</accession>
<accession>Q698P9</accession>
<evidence type="ECO:0000250" key="1"/>
<evidence type="ECO:0000250" key="2">
    <source>
        <dbReference type="UniProtKB" id="P00157"/>
    </source>
</evidence>
<evidence type="ECO:0000255" key="3">
    <source>
        <dbReference type="PROSITE-ProRule" id="PRU00967"/>
    </source>
</evidence>
<evidence type="ECO:0000255" key="4">
    <source>
        <dbReference type="PROSITE-ProRule" id="PRU00968"/>
    </source>
</evidence>
<keyword id="KW-0249">Electron transport</keyword>
<keyword id="KW-0349">Heme</keyword>
<keyword id="KW-0408">Iron</keyword>
<keyword id="KW-0472">Membrane</keyword>
<keyword id="KW-0479">Metal-binding</keyword>
<keyword id="KW-0496">Mitochondrion</keyword>
<keyword id="KW-0999">Mitochondrion inner membrane</keyword>
<keyword id="KW-0679">Respiratory chain</keyword>
<keyword id="KW-0812">Transmembrane</keyword>
<keyword id="KW-1133">Transmembrane helix</keyword>
<keyword id="KW-0813">Transport</keyword>
<keyword id="KW-0830">Ubiquinone</keyword>
<protein>
    <recommendedName>
        <fullName>Cytochrome b</fullName>
    </recommendedName>
    <alternativeName>
        <fullName>Complex III subunit 3</fullName>
    </alternativeName>
    <alternativeName>
        <fullName>Complex III subunit III</fullName>
    </alternativeName>
    <alternativeName>
        <fullName>Cytochrome b-c1 complex subunit 3</fullName>
    </alternativeName>
    <alternativeName>
        <fullName>Ubiquinol-cytochrome-c reductase complex cytochrome b subunit</fullName>
    </alternativeName>
</protein>
<name>CYB_CRAPA</name>
<sequence>MTIMRKSHPLMKIVNHAFIDLPTPPNISGWWNFGSLLGLCLILQILTGLFLAMHYTSDTLTAFSSVMHTCRDVNYGWLIRHMHANGASLFFICLYIHIGRGIYYGSYLYKETWNIGILLLFLTMATAFVGYVLPWGQMSFWGATVITNLLSAIPYIGQDLVEWIWGGFSVDKATLTRFFAFHFILPFIITALAMVHLLFLHETGSNNPLGIPSDSGKVPFHPYYTTKDFLGVILLLTLFMTLVMFFPDKLGDPDNYMPANPLNTPPHIKPEWYFLFAYAILRSIPNKLGGVCALVFSILVLALLPYLHTSKQRSLSFRPLSQTLFWTLVSDLVILTWIGGQPVESPYIIIGQVASILYFSIILVFMPIAGLIENKMLKW</sequence>
<proteinExistence type="inferred from homology"/>
<gene>
    <name type="primary">MT-CYB</name>
    <name type="synonym">COB</name>
    <name type="synonym">CYTB</name>
    <name type="synonym">MTCYB</name>
</gene>
<dbReference type="EMBL" id="AY545539">
    <property type="protein sequence ID" value="AAT39355.1"/>
    <property type="molecule type" value="Genomic_DNA"/>
</dbReference>
<dbReference type="EMBL" id="AY545540">
    <property type="protein sequence ID" value="AAT39356.1"/>
    <property type="molecule type" value="Genomic_DNA"/>
</dbReference>
<dbReference type="EMBL" id="AY545541">
    <property type="protein sequence ID" value="AAT39357.1"/>
    <property type="molecule type" value="Genomic_DNA"/>
</dbReference>
<dbReference type="SMR" id="Q698P7"/>
<dbReference type="GO" id="GO:0005743">
    <property type="term" value="C:mitochondrial inner membrane"/>
    <property type="evidence" value="ECO:0007669"/>
    <property type="project" value="UniProtKB-SubCell"/>
</dbReference>
<dbReference type="GO" id="GO:0045275">
    <property type="term" value="C:respiratory chain complex III"/>
    <property type="evidence" value="ECO:0007669"/>
    <property type="project" value="InterPro"/>
</dbReference>
<dbReference type="GO" id="GO:0046872">
    <property type="term" value="F:metal ion binding"/>
    <property type="evidence" value="ECO:0007669"/>
    <property type="project" value="UniProtKB-KW"/>
</dbReference>
<dbReference type="GO" id="GO:0008121">
    <property type="term" value="F:ubiquinol-cytochrome-c reductase activity"/>
    <property type="evidence" value="ECO:0007669"/>
    <property type="project" value="InterPro"/>
</dbReference>
<dbReference type="GO" id="GO:0006122">
    <property type="term" value="P:mitochondrial electron transport, ubiquinol to cytochrome c"/>
    <property type="evidence" value="ECO:0007669"/>
    <property type="project" value="TreeGrafter"/>
</dbReference>
<dbReference type="CDD" id="cd00290">
    <property type="entry name" value="cytochrome_b_C"/>
    <property type="match status" value="1"/>
</dbReference>
<dbReference type="CDD" id="cd00284">
    <property type="entry name" value="Cytochrome_b_N"/>
    <property type="match status" value="1"/>
</dbReference>
<dbReference type="FunFam" id="1.20.810.10:FF:000002">
    <property type="entry name" value="Cytochrome b"/>
    <property type="match status" value="1"/>
</dbReference>
<dbReference type="Gene3D" id="1.20.810.10">
    <property type="entry name" value="Cytochrome Bc1 Complex, Chain C"/>
    <property type="match status" value="1"/>
</dbReference>
<dbReference type="InterPro" id="IPR005798">
    <property type="entry name" value="Cyt_b/b6_C"/>
</dbReference>
<dbReference type="InterPro" id="IPR036150">
    <property type="entry name" value="Cyt_b/b6_C_sf"/>
</dbReference>
<dbReference type="InterPro" id="IPR005797">
    <property type="entry name" value="Cyt_b/b6_N"/>
</dbReference>
<dbReference type="InterPro" id="IPR027387">
    <property type="entry name" value="Cytb/b6-like_sf"/>
</dbReference>
<dbReference type="InterPro" id="IPR030689">
    <property type="entry name" value="Cytochrome_b"/>
</dbReference>
<dbReference type="InterPro" id="IPR048260">
    <property type="entry name" value="Cytochrome_b_C_euk/bac"/>
</dbReference>
<dbReference type="InterPro" id="IPR048259">
    <property type="entry name" value="Cytochrome_b_N_euk/bac"/>
</dbReference>
<dbReference type="InterPro" id="IPR016174">
    <property type="entry name" value="Di-haem_cyt_TM"/>
</dbReference>
<dbReference type="PANTHER" id="PTHR19271">
    <property type="entry name" value="CYTOCHROME B"/>
    <property type="match status" value="1"/>
</dbReference>
<dbReference type="PANTHER" id="PTHR19271:SF16">
    <property type="entry name" value="CYTOCHROME B"/>
    <property type="match status" value="1"/>
</dbReference>
<dbReference type="Pfam" id="PF00032">
    <property type="entry name" value="Cytochrom_B_C"/>
    <property type="match status" value="1"/>
</dbReference>
<dbReference type="Pfam" id="PF00033">
    <property type="entry name" value="Cytochrome_B"/>
    <property type="match status" value="1"/>
</dbReference>
<dbReference type="PIRSF" id="PIRSF038885">
    <property type="entry name" value="COB"/>
    <property type="match status" value="1"/>
</dbReference>
<dbReference type="SUPFAM" id="SSF81648">
    <property type="entry name" value="a domain/subunit of cytochrome bc1 complex (Ubiquinol-cytochrome c reductase)"/>
    <property type="match status" value="1"/>
</dbReference>
<dbReference type="SUPFAM" id="SSF81342">
    <property type="entry name" value="Transmembrane di-heme cytochromes"/>
    <property type="match status" value="1"/>
</dbReference>
<dbReference type="PROSITE" id="PS51003">
    <property type="entry name" value="CYTB_CTER"/>
    <property type="match status" value="1"/>
</dbReference>
<dbReference type="PROSITE" id="PS51002">
    <property type="entry name" value="CYTB_NTER"/>
    <property type="match status" value="1"/>
</dbReference>